<name>EXTL2_HUMAN</name>
<proteinExistence type="evidence at protein level"/>
<accession>Q9UBQ6</accession>
<accession>B2R795</accession>
<accession>D3DT60</accession>
<organism>
    <name type="scientific">Homo sapiens</name>
    <name type="common">Human</name>
    <dbReference type="NCBI Taxonomy" id="9606"/>
    <lineage>
        <taxon>Eukaryota</taxon>
        <taxon>Metazoa</taxon>
        <taxon>Chordata</taxon>
        <taxon>Craniata</taxon>
        <taxon>Vertebrata</taxon>
        <taxon>Euteleostomi</taxon>
        <taxon>Mammalia</taxon>
        <taxon>Eutheria</taxon>
        <taxon>Euarchontoglires</taxon>
        <taxon>Primates</taxon>
        <taxon>Haplorrhini</taxon>
        <taxon>Catarrhini</taxon>
        <taxon>Hominidae</taxon>
        <taxon>Homo</taxon>
    </lineage>
</organism>
<feature type="chain" id="PRO_0000149655" description="Exostosin-like 2">
    <location>
        <begin position="1"/>
        <end position="330"/>
    </location>
</feature>
<feature type="chain" id="PRO_0000296227" description="Processed exostosin-like 2">
    <location>
        <begin status="unknown"/>
        <end position="330"/>
    </location>
</feature>
<feature type="topological domain" description="Cytoplasmic" evidence="3">
    <location>
        <begin position="1"/>
        <end position="22"/>
    </location>
</feature>
<feature type="transmembrane region" description="Helical; Signal-anchor for type II membrane protein" evidence="3">
    <location>
        <begin position="23"/>
        <end position="43"/>
    </location>
</feature>
<feature type="topological domain" description="Lumenal" evidence="3">
    <location>
        <begin position="44"/>
        <end position="330"/>
    </location>
</feature>
<feature type="active site" evidence="2">
    <location>
        <position position="245"/>
    </location>
</feature>
<feature type="binding site" evidence="2">
    <location>
        <position position="71"/>
    </location>
    <ligand>
        <name>UDP-N-acetyl-alpha-D-galactosamine</name>
        <dbReference type="ChEBI" id="CHEBI:67138"/>
    </ligand>
</feature>
<feature type="binding site" evidence="2">
    <location>
        <position position="71"/>
    </location>
    <ligand>
        <name>UDP-N-acetyl-alpha-D-glucosamine</name>
        <dbReference type="ChEBI" id="CHEBI:57705"/>
    </ligand>
</feature>
<feature type="binding site" evidence="2">
    <location>
        <position position="75"/>
    </location>
    <ligand>
        <name>UDP-N-acetyl-alpha-D-galactosamine</name>
        <dbReference type="ChEBI" id="CHEBI:67138"/>
    </ligand>
</feature>
<feature type="binding site" evidence="2">
    <location>
        <position position="75"/>
    </location>
    <ligand>
        <name>UDP-N-acetyl-alpha-D-glucosamine</name>
        <dbReference type="ChEBI" id="CHEBI:57705"/>
    </ligand>
</feature>
<feature type="binding site" evidence="2">
    <location>
        <position position="100"/>
    </location>
    <ligand>
        <name>UDP-N-acetyl-alpha-D-galactosamine</name>
        <dbReference type="ChEBI" id="CHEBI:67138"/>
    </ligand>
</feature>
<feature type="binding site" evidence="2">
    <location>
        <position position="100"/>
    </location>
    <ligand>
        <name>UDP-N-acetyl-alpha-D-glucosamine</name>
        <dbReference type="ChEBI" id="CHEBI:57705"/>
    </ligand>
</feature>
<feature type="binding site" evidence="2">
    <location>
        <position position="129"/>
    </location>
    <ligand>
        <name>UDP-N-acetyl-alpha-D-galactosamine</name>
        <dbReference type="ChEBI" id="CHEBI:67138"/>
    </ligand>
</feature>
<feature type="binding site" evidence="2">
    <location>
        <position position="129"/>
    </location>
    <ligand>
        <name>UDP-N-acetyl-alpha-D-glucosamine</name>
        <dbReference type="ChEBI" id="CHEBI:57705"/>
    </ligand>
</feature>
<feature type="binding site" evidence="2">
    <location>
        <position position="134"/>
    </location>
    <ligand>
        <name>UDP-N-acetyl-alpha-D-galactosamine</name>
        <dbReference type="ChEBI" id="CHEBI:67138"/>
    </ligand>
</feature>
<feature type="binding site" evidence="2">
    <location>
        <position position="134"/>
    </location>
    <ligand>
        <name>UDP-N-acetyl-alpha-D-glucosamine</name>
        <dbReference type="ChEBI" id="CHEBI:57705"/>
    </ligand>
</feature>
<feature type="binding site" evidence="2">
    <location>
        <position position="150"/>
    </location>
    <ligand>
        <name>UDP-N-acetyl-alpha-D-galactosamine</name>
        <dbReference type="ChEBI" id="CHEBI:67138"/>
    </ligand>
</feature>
<feature type="binding site" evidence="2">
    <location>
        <position position="150"/>
    </location>
    <ligand>
        <name>UDP-N-acetyl-alpha-D-glucosamine</name>
        <dbReference type="ChEBI" id="CHEBI:57705"/>
    </ligand>
</feature>
<feature type="binding site" evidence="2">
    <location>
        <position position="151"/>
    </location>
    <ligand>
        <name>UDP-N-acetyl-alpha-D-galactosamine</name>
        <dbReference type="ChEBI" id="CHEBI:67138"/>
    </ligand>
</feature>
<feature type="binding site" evidence="2">
    <location>
        <position position="151"/>
    </location>
    <ligand>
        <name>UDP-N-acetyl-alpha-D-glucosamine</name>
        <dbReference type="ChEBI" id="CHEBI:57705"/>
    </ligand>
</feature>
<feature type="binding site" evidence="2">
    <location>
        <position position="152"/>
    </location>
    <ligand>
        <name>Mn(2+)</name>
        <dbReference type="ChEBI" id="CHEBI:29035"/>
        <note>catalytic</note>
    </ligand>
</feature>
<feature type="binding site" evidence="2">
    <location>
        <position position="152"/>
    </location>
    <ligand>
        <name>UDP-N-acetyl-alpha-D-galactosamine</name>
        <dbReference type="ChEBI" id="CHEBI:67138"/>
    </ligand>
</feature>
<feature type="binding site" evidence="2">
    <location>
        <position position="152"/>
    </location>
    <ligand>
        <name>UDP-N-acetyl-alpha-D-glucosamine</name>
        <dbReference type="ChEBI" id="CHEBI:57705"/>
    </ligand>
</feature>
<feature type="binding site" evidence="2">
    <location>
        <position position="244"/>
    </location>
    <ligand>
        <name>UDP-N-acetyl-alpha-D-galactosamine</name>
        <dbReference type="ChEBI" id="CHEBI:67138"/>
    </ligand>
</feature>
<feature type="binding site" evidence="2">
    <location>
        <position position="244"/>
    </location>
    <ligand>
        <name>UDP-N-acetyl-alpha-D-glucosamine</name>
        <dbReference type="ChEBI" id="CHEBI:57705"/>
    </ligand>
</feature>
<feature type="binding site" evidence="2">
    <location>
        <position position="245"/>
    </location>
    <ligand>
        <name>UDP-N-acetyl-alpha-D-glucosamine</name>
        <dbReference type="ChEBI" id="CHEBI:57705"/>
    </ligand>
</feature>
<feature type="binding site" evidence="2">
    <location>
        <position position="293"/>
    </location>
    <ligand>
        <name>UDP-N-acetyl-alpha-D-galactosamine</name>
        <dbReference type="ChEBI" id="CHEBI:67138"/>
    </ligand>
</feature>
<feature type="binding site" evidence="2">
    <location>
        <position position="293"/>
    </location>
    <ligand>
        <name>UDP-N-acetyl-alpha-D-glucosamine</name>
        <dbReference type="ChEBI" id="CHEBI:57705"/>
    </ligand>
</feature>
<feature type="site" description="Cleavage">
    <location>
        <begin position="53"/>
        <end position="54"/>
    </location>
</feature>
<feature type="glycosylation site" description="N-linked (GlcNAc...) asparagine" evidence="3">
    <location>
        <position position="74"/>
    </location>
</feature>
<feature type="disulfide bond" evidence="2">
    <location>
        <begin position="243"/>
        <end position="296"/>
    </location>
</feature>
<keyword id="KW-0903">Direct protein sequencing</keyword>
<keyword id="KW-1015">Disulfide bond</keyword>
<keyword id="KW-0256">Endoplasmic reticulum</keyword>
<keyword id="KW-0325">Glycoprotein</keyword>
<keyword id="KW-0328">Glycosyltransferase</keyword>
<keyword id="KW-0464">Manganese</keyword>
<keyword id="KW-0472">Membrane</keyword>
<keyword id="KW-0479">Metal-binding</keyword>
<keyword id="KW-1267">Proteomics identification</keyword>
<keyword id="KW-1185">Reference proteome</keyword>
<keyword id="KW-0964">Secreted</keyword>
<keyword id="KW-0735">Signal-anchor</keyword>
<keyword id="KW-0808">Transferase</keyword>
<keyword id="KW-0812">Transmembrane</keyword>
<keyword id="KW-1133">Transmembrane helix</keyword>
<gene>
    <name type="primary">EXTL2</name>
    <name type="synonym">EXTR2</name>
</gene>
<dbReference type="EC" id="2.4.1.223" evidence="2"/>
<dbReference type="EMBL" id="AF000416">
    <property type="protein sequence ID" value="AAC02898.1"/>
    <property type="molecule type" value="mRNA"/>
</dbReference>
<dbReference type="EMBL" id="AB009284">
    <property type="protein sequence ID" value="BAA24081.1"/>
    <property type="molecule type" value="mRNA"/>
</dbReference>
<dbReference type="EMBL" id="AK312895">
    <property type="protein sequence ID" value="BAG35742.1"/>
    <property type="molecule type" value="mRNA"/>
</dbReference>
<dbReference type="EMBL" id="CH471097">
    <property type="protein sequence ID" value="EAW72946.1"/>
    <property type="molecule type" value="Genomic_DNA"/>
</dbReference>
<dbReference type="EMBL" id="CH471097">
    <property type="protein sequence ID" value="EAW72948.1"/>
    <property type="molecule type" value="Genomic_DNA"/>
</dbReference>
<dbReference type="CCDS" id="CCDS775.1"/>
<dbReference type="PIR" id="JC5935">
    <property type="entry name" value="JC5935"/>
</dbReference>
<dbReference type="RefSeq" id="NP_001028197.1">
    <property type="nucleotide sequence ID" value="NM_001033025.3"/>
</dbReference>
<dbReference type="RefSeq" id="NP_001430.1">
    <property type="nucleotide sequence ID" value="NM_001439.4"/>
</dbReference>
<dbReference type="RefSeq" id="XP_005270678.1">
    <property type="nucleotide sequence ID" value="XM_005270621.2"/>
</dbReference>
<dbReference type="RefSeq" id="XP_047305363.1">
    <property type="nucleotide sequence ID" value="XM_047449407.1"/>
</dbReference>
<dbReference type="RefSeq" id="XP_047305364.1">
    <property type="nucleotide sequence ID" value="XM_047449408.1"/>
</dbReference>
<dbReference type="RefSeq" id="XP_054191078.1">
    <property type="nucleotide sequence ID" value="XM_054335103.1"/>
</dbReference>
<dbReference type="RefSeq" id="XP_054191079.1">
    <property type="nucleotide sequence ID" value="XM_054335104.1"/>
</dbReference>
<dbReference type="RefSeq" id="XP_054191080.1">
    <property type="nucleotide sequence ID" value="XM_054335105.1"/>
</dbReference>
<dbReference type="RefSeq" id="XP_054191081.1">
    <property type="nucleotide sequence ID" value="XM_054335106.1"/>
</dbReference>
<dbReference type="RefSeq" id="XP_054191082.1">
    <property type="nucleotide sequence ID" value="XM_054335107.1"/>
</dbReference>
<dbReference type="RefSeq" id="XP_054191083.1">
    <property type="nucleotide sequence ID" value="XM_054335108.1"/>
</dbReference>
<dbReference type="SMR" id="Q9UBQ6"/>
<dbReference type="BioGRID" id="108436">
    <property type="interactions" value="50"/>
</dbReference>
<dbReference type="FunCoup" id="Q9UBQ6">
    <property type="interactions" value="1520"/>
</dbReference>
<dbReference type="IntAct" id="Q9UBQ6">
    <property type="interactions" value="46"/>
</dbReference>
<dbReference type="MINT" id="Q9UBQ6"/>
<dbReference type="STRING" id="9606.ENSP00000359131"/>
<dbReference type="DrugBank" id="DB03435">
    <property type="generic name" value="Uridine-5'-Diphosphate"/>
</dbReference>
<dbReference type="DrugBank" id="DB02196">
    <property type="generic name" value="Uridine-Diphosphate-N-Acetylgalactosamine"/>
</dbReference>
<dbReference type="DrugBank" id="DB03397">
    <property type="generic name" value="Uridine-Diphosphate-N-Acetylglucosamine"/>
</dbReference>
<dbReference type="CAZy" id="GT64">
    <property type="family name" value="Glycosyltransferase Family 64"/>
</dbReference>
<dbReference type="GlyCosmos" id="Q9UBQ6">
    <property type="glycosylation" value="1 site, No reported glycans"/>
</dbReference>
<dbReference type="GlyGen" id="Q9UBQ6">
    <property type="glycosylation" value="1 site, 4 N-linked glycans (1 site)"/>
</dbReference>
<dbReference type="iPTMnet" id="Q9UBQ6"/>
<dbReference type="PhosphoSitePlus" id="Q9UBQ6"/>
<dbReference type="SwissPalm" id="Q9UBQ6"/>
<dbReference type="BioMuta" id="EXTL2"/>
<dbReference type="DMDM" id="9296986"/>
<dbReference type="jPOST" id="Q9UBQ6"/>
<dbReference type="MassIVE" id="Q9UBQ6"/>
<dbReference type="PaxDb" id="9606-ENSP00000359132"/>
<dbReference type="PeptideAtlas" id="Q9UBQ6"/>
<dbReference type="ProteomicsDB" id="84033"/>
<dbReference type="Pumba" id="Q9UBQ6"/>
<dbReference type="Antibodypedia" id="33697">
    <property type="antibodies" value="148 antibodies from 25 providers"/>
</dbReference>
<dbReference type="DNASU" id="2135"/>
<dbReference type="Ensembl" id="ENST00000370113.7">
    <property type="protein sequence ID" value="ENSP00000359131.3"/>
    <property type="gene ID" value="ENSG00000162694.14"/>
</dbReference>
<dbReference type="Ensembl" id="ENST00000370114.8">
    <property type="protein sequence ID" value="ENSP00000359132.3"/>
    <property type="gene ID" value="ENSG00000162694.14"/>
</dbReference>
<dbReference type="GeneID" id="2135"/>
<dbReference type="KEGG" id="hsa:2135"/>
<dbReference type="MANE-Select" id="ENST00000370114.8">
    <property type="protein sequence ID" value="ENSP00000359132.3"/>
    <property type="RefSeq nucleotide sequence ID" value="NM_001033025.3"/>
    <property type="RefSeq protein sequence ID" value="NP_001028197.1"/>
</dbReference>
<dbReference type="UCSC" id="uc001dtk.3">
    <property type="organism name" value="human"/>
</dbReference>
<dbReference type="AGR" id="HGNC:3516"/>
<dbReference type="CTD" id="2135"/>
<dbReference type="DisGeNET" id="2135"/>
<dbReference type="GeneCards" id="EXTL2"/>
<dbReference type="HGNC" id="HGNC:3516">
    <property type="gene designation" value="EXTL2"/>
</dbReference>
<dbReference type="HPA" id="ENSG00000162694">
    <property type="expression patterns" value="Low tissue specificity"/>
</dbReference>
<dbReference type="MIM" id="602411">
    <property type="type" value="gene"/>
</dbReference>
<dbReference type="neXtProt" id="NX_Q9UBQ6"/>
<dbReference type="OpenTargets" id="ENSG00000162694"/>
<dbReference type="PharmGKB" id="PA27928"/>
<dbReference type="VEuPathDB" id="HostDB:ENSG00000162694"/>
<dbReference type="eggNOG" id="KOG1022">
    <property type="taxonomic scope" value="Eukaryota"/>
</dbReference>
<dbReference type="GeneTree" id="ENSGT00940000158820"/>
<dbReference type="HOGENOM" id="CLU_013906_0_0_1"/>
<dbReference type="InParanoid" id="Q9UBQ6"/>
<dbReference type="OMA" id="HYQGVPH"/>
<dbReference type="OrthoDB" id="2014201at2759"/>
<dbReference type="PAN-GO" id="Q9UBQ6">
    <property type="GO annotations" value="0 GO annotations based on evolutionary models"/>
</dbReference>
<dbReference type="PhylomeDB" id="Q9UBQ6"/>
<dbReference type="TreeFam" id="TF314231"/>
<dbReference type="BioCyc" id="MetaCyc:HS08719-MONOMER"/>
<dbReference type="BRENDA" id="2.4.1.223">
    <property type="organism ID" value="2681"/>
</dbReference>
<dbReference type="PathwayCommons" id="Q9UBQ6"/>
<dbReference type="Reactome" id="R-HSA-381038">
    <property type="pathway name" value="XBP1(S) activates chaperone genes"/>
</dbReference>
<dbReference type="SignaLink" id="Q9UBQ6"/>
<dbReference type="UniPathway" id="UPA00756"/>
<dbReference type="BioGRID-ORCS" id="2135">
    <property type="hits" value="37 hits in 1160 CRISPR screens"/>
</dbReference>
<dbReference type="ChiTaRS" id="EXTL2">
    <property type="organism name" value="human"/>
</dbReference>
<dbReference type="GeneWiki" id="EXTL2"/>
<dbReference type="GenomeRNAi" id="2135"/>
<dbReference type="Pharos" id="Q9UBQ6">
    <property type="development level" value="Tbio"/>
</dbReference>
<dbReference type="PRO" id="PR:Q9UBQ6"/>
<dbReference type="Proteomes" id="UP000005640">
    <property type="component" value="Chromosome 1"/>
</dbReference>
<dbReference type="RNAct" id="Q9UBQ6">
    <property type="molecule type" value="protein"/>
</dbReference>
<dbReference type="Bgee" id="ENSG00000162694">
    <property type="expression patterns" value="Expressed in adrenal tissue and 197 other cell types or tissues"/>
</dbReference>
<dbReference type="ExpressionAtlas" id="Q9UBQ6">
    <property type="expression patterns" value="baseline and differential"/>
</dbReference>
<dbReference type="GO" id="GO:0005829">
    <property type="term" value="C:cytosol"/>
    <property type="evidence" value="ECO:0000314"/>
    <property type="project" value="HPA"/>
</dbReference>
<dbReference type="GO" id="GO:0005783">
    <property type="term" value="C:endoplasmic reticulum"/>
    <property type="evidence" value="ECO:0000314"/>
    <property type="project" value="BHF-UCL"/>
</dbReference>
<dbReference type="GO" id="GO:0005789">
    <property type="term" value="C:endoplasmic reticulum membrane"/>
    <property type="evidence" value="ECO:0000304"/>
    <property type="project" value="Reactome"/>
</dbReference>
<dbReference type="GO" id="GO:0005576">
    <property type="term" value="C:extracellular region"/>
    <property type="evidence" value="ECO:0007669"/>
    <property type="project" value="UniProtKB-SubCell"/>
</dbReference>
<dbReference type="GO" id="GO:0005654">
    <property type="term" value="C:nucleoplasm"/>
    <property type="evidence" value="ECO:0000314"/>
    <property type="project" value="HPA"/>
</dbReference>
<dbReference type="GO" id="GO:0035248">
    <property type="term" value="F:alpha-1,4-N-acetylgalactosaminyltransferase activity"/>
    <property type="evidence" value="ECO:0000314"/>
    <property type="project" value="UniProtKB"/>
</dbReference>
<dbReference type="GO" id="GO:0001888">
    <property type="term" value="F:glucuronyl-galactosyl-proteoglycan 4-alpha-N-acetylglucosaminyltransferase activity"/>
    <property type="evidence" value="ECO:0000314"/>
    <property type="project" value="UniProtKB"/>
</dbReference>
<dbReference type="GO" id="GO:0047237">
    <property type="term" value="F:glucuronylgalactosylproteoglycan 4-beta-N-acetylgalactosaminyltransferase activity"/>
    <property type="evidence" value="ECO:0007669"/>
    <property type="project" value="Ensembl"/>
</dbReference>
<dbReference type="GO" id="GO:0005539">
    <property type="term" value="F:glycosaminoglycan binding"/>
    <property type="evidence" value="ECO:0007669"/>
    <property type="project" value="Ensembl"/>
</dbReference>
<dbReference type="GO" id="GO:0030145">
    <property type="term" value="F:manganese ion binding"/>
    <property type="evidence" value="ECO:0007669"/>
    <property type="project" value="Ensembl"/>
</dbReference>
<dbReference type="GO" id="GO:0015012">
    <property type="term" value="P:heparan sulfate proteoglycan biosynthetic process"/>
    <property type="evidence" value="ECO:0007669"/>
    <property type="project" value="UniProtKB-UniPathway"/>
</dbReference>
<dbReference type="GO" id="GO:0006044">
    <property type="term" value="P:N-acetylglucosamine metabolic process"/>
    <property type="evidence" value="ECO:0000314"/>
    <property type="project" value="UniProtKB"/>
</dbReference>
<dbReference type="GO" id="GO:0019276">
    <property type="term" value="P:UDP-N-acetylgalactosamine metabolic process"/>
    <property type="evidence" value="ECO:0000314"/>
    <property type="project" value="UniProtKB"/>
</dbReference>
<dbReference type="FunFam" id="3.90.550.10:FF:000058">
    <property type="entry name" value="Exostosin-like glycosyltransferase 2"/>
    <property type="match status" value="1"/>
</dbReference>
<dbReference type="Gene3D" id="3.90.550.10">
    <property type="entry name" value="Spore Coat Polysaccharide Biosynthesis Protein SpsA, Chain A"/>
    <property type="match status" value="1"/>
</dbReference>
<dbReference type="InterPro" id="IPR052427">
    <property type="entry name" value="Glycosyltrans_GT2/GT47"/>
</dbReference>
<dbReference type="InterPro" id="IPR015338">
    <property type="entry name" value="GT64_dom"/>
</dbReference>
<dbReference type="InterPro" id="IPR029044">
    <property type="entry name" value="Nucleotide-diphossugar_trans"/>
</dbReference>
<dbReference type="PANTHER" id="PTHR47844:SF1">
    <property type="entry name" value="EXOSTOSIN-LIKE 2"/>
    <property type="match status" value="1"/>
</dbReference>
<dbReference type="PANTHER" id="PTHR47844">
    <property type="entry name" value="SYNTHASE CPS1, PUTATIVE (AFU_ORTHOLOGUE AFUA_7G02500)-RELATED"/>
    <property type="match status" value="1"/>
</dbReference>
<dbReference type="Pfam" id="PF09258">
    <property type="entry name" value="Glyco_transf_64"/>
    <property type="match status" value="1"/>
</dbReference>
<dbReference type="SUPFAM" id="SSF53448">
    <property type="entry name" value="Nucleotide-diphospho-sugar transferases"/>
    <property type="match status" value="1"/>
</dbReference>
<reference key="1">
    <citation type="journal article" date="1997" name="Eur. J. Hum. Genet.">
        <title>Identification and characterization of a novel member of the EXT gene family, EXTL2.</title>
        <authorList>
            <person name="Wuyts W."/>
            <person name="Van Hul W."/>
            <person name="Hendrickx J."/>
            <person name="Speleman F."/>
            <person name="Wauters J."/>
            <person name="De Boulle K."/>
            <person name="Van Roy N."/>
            <person name="Van Agtmael T."/>
            <person name="Bossuyt P."/>
            <person name="Willems P.J."/>
        </authorList>
    </citation>
    <scope>NUCLEOTIDE SEQUENCE [MRNA]</scope>
</reference>
<reference key="2">
    <citation type="journal article" date="1998" name="Biochem. Biophys. Res. Commun.">
        <title>Structure, chromosomal location, and expression profile of EXTR1 and EXTR2, new members of the multiple exostoses gene family.</title>
        <authorList>
            <person name="Saito T."/>
            <person name="Seki N."/>
            <person name="Yamauchi M."/>
            <person name="Tsuji S."/>
            <person name="Hayashi A."/>
            <person name="Kozuma S."/>
            <person name="Hori T.-A."/>
        </authorList>
    </citation>
    <scope>NUCLEOTIDE SEQUENCE [MRNA]</scope>
</reference>
<reference key="3">
    <citation type="journal article" date="2000" name="Proc. Natl. Acad. Sci. U.S.A.">
        <title>The putative tumor suppressors EXT1 and EXT2 form a stable complex that accumulates in the Golgi apparatus and catalyzes the synthesis of heparan sulfate.</title>
        <authorList>
            <person name="McCormick C."/>
            <person name="Duncan G."/>
            <person name="Goutsos K.T."/>
            <person name="Tufaro F."/>
        </authorList>
    </citation>
    <scope>SUBCELLULAR LOCATION</scope>
</reference>
<reference key="4">
    <citation type="journal article" date="1999" name="J. Biol. Chem.">
        <title>The tumor suppressor EXT-like gene EXTL2 encodes an alpha1, 4-N-acetylhexosaminyltransferase that transfers N-acetylgalactosamine and N-acetylglucosamine to the common glycosaminoglycan-protein linkage region. The key enzyme for the chain initiation of heparan sulfate.</title>
        <authorList>
            <person name="Kitagawa H."/>
            <person name="Shimakawa H."/>
            <person name="Sugahara K."/>
        </authorList>
    </citation>
    <scope>FUNCTION</scope>
    <scope>PROTEIN SEQUENCE OF 54-83</scope>
    <scope>CATALYTIC ACTIVITY</scope>
</reference>
<reference key="5">
    <citation type="journal article" date="2004" name="Nat. Genet.">
        <title>Complete sequencing and characterization of 21,243 full-length human cDNAs.</title>
        <authorList>
            <person name="Ota T."/>
            <person name="Suzuki Y."/>
            <person name="Nishikawa T."/>
            <person name="Otsuki T."/>
            <person name="Sugiyama T."/>
            <person name="Irie R."/>
            <person name="Wakamatsu A."/>
            <person name="Hayashi K."/>
            <person name="Sato H."/>
            <person name="Nagai K."/>
            <person name="Kimura K."/>
            <person name="Makita H."/>
            <person name="Sekine M."/>
            <person name="Obayashi M."/>
            <person name="Nishi T."/>
            <person name="Shibahara T."/>
            <person name="Tanaka T."/>
            <person name="Ishii S."/>
            <person name="Yamamoto J."/>
            <person name="Saito K."/>
            <person name="Kawai Y."/>
            <person name="Isono Y."/>
            <person name="Nakamura Y."/>
            <person name="Nagahari K."/>
            <person name="Murakami K."/>
            <person name="Yasuda T."/>
            <person name="Iwayanagi T."/>
            <person name="Wagatsuma M."/>
            <person name="Shiratori A."/>
            <person name="Sudo H."/>
            <person name="Hosoiri T."/>
            <person name="Kaku Y."/>
            <person name="Kodaira H."/>
            <person name="Kondo H."/>
            <person name="Sugawara M."/>
            <person name="Takahashi M."/>
            <person name="Kanda K."/>
            <person name="Yokoi T."/>
            <person name="Furuya T."/>
            <person name="Kikkawa E."/>
            <person name="Omura Y."/>
            <person name="Abe K."/>
            <person name="Kamihara K."/>
            <person name="Katsuta N."/>
            <person name="Sato K."/>
            <person name="Tanikawa M."/>
            <person name="Yamazaki M."/>
            <person name="Ninomiya K."/>
            <person name="Ishibashi T."/>
            <person name="Yamashita H."/>
            <person name="Murakawa K."/>
            <person name="Fujimori K."/>
            <person name="Tanai H."/>
            <person name="Kimata M."/>
            <person name="Watanabe M."/>
            <person name="Hiraoka S."/>
            <person name="Chiba Y."/>
            <person name="Ishida S."/>
            <person name="Ono Y."/>
            <person name="Takiguchi S."/>
            <person name="Watanabe S."/>
            <person name="Yosida M."/>
            <person name="Hotuta T."/>
            <person name="Kusano J."/>
            <person name="Kanehori K."/>
            <person name="Takahashi-Fujii A."/>
            <person name="Hara H."/>
            <person name="Tanase T.-O."/>
            <person name="Nomura Y."/>
            <person name="Togiya S."/>
            <person name="Komai F."/>
            <person name="Hara R."/>
            <person name="Takeuchi K."/>
            <person name="Arita M."/>
            <person name="Imose N."/>
            <person name="Musashino K."/>
            <person name="Yuuki H."/>
            <person name="Oshima A."/>
            <person name="Sasaki N."/>
            <person name="Aotsuka S."/>
            <person name="Yoshikawa Y."/>
            <person name="Matsunawa H."/>
            <person name="Ichihara T."/>
            <person name="Shiohata N."/>
            <person name="Sano S."/>
            <person name="Moriya S."/>
            <person name="Momiyama H."/>
            <person name="Satoh N."/>
            <person name="Takami S."/>
            <person name="Terashima Y."/>
            <person name="Suzuki O."/>
            <person name="Nakagawa S."/>
            <person name="Senoh A."/>
            <person name="Mizoguchi H."/>
            <person name="Goto Y."/>
            <person name="Shimizu F."/>
            <person name="Wakebe H."/>
            <person name="Hishigaki H."/>
            <person name="Watanabe T."/>
            <person name="Sugiyama A."/>
            <person name="Takemoto M."/>
            <person name="Kawakami B."/>
            <person name="Yamazaki M."/>
            <person name="Watanabe K."/>
            <person name="Kumagai A."/>
            <person name="Itakura S."/>
            <person name="Fukuzumi Y."/>
            <person name="Fujimori Y."/>
            <person name="Komiyama M."/>
            <person name="Tashiro H."/>
            <person name="Tanigami A."/>
            <person name="Fujiwara T."/>
            <person name="Ono T."/>
            <person name="Yamada K."/>
            <person name="Fujii Y."/>
            <person name="Ozaki K."/>
            <person name="Hirao M."/>
            <person name="Ohmori Y."/>
            <person name="Kawabata A."/>
            <person name="Hikiji T."/>
            <person name="Kobatake N."/>
            <person name="Inagaki H."/>
            <person name="Ikema Y."/>
            <person name="Okamoto S."/>
            <person name="Okitani R."/>
            <person name="Kawakami T."/>
            <person name="Noguchi S."/>
            <person name="Itoh T."/>
            <person name="Shigeta K."/>
            <person name="Senba T."/>
            <person name="Matsumura K."/>
            <person name="Nakajima Y."/>
            <person name="Mizuno T."/>
            <person name="Morinaga M."/>
            <person name="Sasaki M."/>
            <person name="Togashi T."/>
            <person name="Oyama M."/>
            <person name="Hata H."/>
            <person name="Watanabe M."/>
            <person name="Komatsu T."/>
            <person name="Mizushima-Sugano J."/>
            <person name="Satoh T."/>
            <person name="Shirai Y."/>
            <person name="Takahashi Y."/>
            <person name="Nakagawa K."/>
            <person name="Okumura K."/>
            <person name="Nagase T."/>
            <person name="Nomura N."/>
            <person name="Kikuchi H."/>
            <person name="Masuho Y."/>
            <person name="Yamashita R."/>
            <person name="Nakai K."/>
            <person name="Yada T."/>
            <person name="Nakamura Y."/>
            <person name="Ohara O."/>
            <person name="Isogai T."/>
            <person name="Sugano S."/>
        </authorList>
    </citation>
    <scope>NUCLEOTIDE SEQUENCE [LARGE SCALE MRNA]</scope>
    <source>
        <tissue>Amygdala</tissue>
    </source>
</reference>
<reference key="6">
    <citation type="submission" date="2005-09" db="EMBL/GenBank/DDBJ databases">
        <authorList>
            <person name="Mural R.J."/>
            <person name="Istrail S."/>
            <person name="Sutton G.G."/>
            <person name="Florea L."/>
            <person name="Halpern A.L."/>
            <person name="Mobarry C.M."/>
            <person name="Lippert R."/>
            <person name="Walenz B."/>
            <person name="Shatkay H."/>
            <person name="Dew I."/>
            <person name="Miller J.R."/>
            <person name="Flanigan M.J."/>
            <person name="Edwards N.J."/>
            <person name="Bolanos R."/>
            <person name="Fasulo D."/>
            <person name="Halldorsson B.V."/>
            <person name="Hannenhalli S."/>
            <person name="Turner R."/>
            <person name="Yooseph S."/>
            <person name="Lu F."/>
            <person name="Nusskern D.R."/>
            <person name="Shue B.C."/>
            <person name="Zheng X.H."/>
            <person name="Zhong F."/>
            <person name="Delcher A.L."/>
            <person name="Huson D.H."/>
            <person name="Kravitz S.A."/>
            <person name="Mouchard L."/>
            <person name="Reinert K."/>
            <person name="Remington K.A."/>
            <person name="Clark A.G."/>
            <person name="Waterman M.S."/>
            <person name="Eichler E.E."/>
            <person name="Adams M.D."/>
            <person name="Hunkapiller M.W."/>
            <person name="Myers E.W."/>
            <person name="Venter J.C."/>
        </authorList>
    </citation>
    <scope>NUCLEOTIDE SEQUENCE [LARGE SCALE GENOMIC DNA]</scope>
</reference>
<comment type="function">
    <text evidence="4">Glycosyltransferase required for the biosynthesis of heparan-sulfate and responsible for the alternating addition of beta-1-4-linked glucuronic acid (GlcA) and alpha-1-4-linked N-acetylglucosamine (GlcNAc) units to nascent heparan sulfate chains.</text>
</comment>
<comment type="catalytic activity">
    <reaction evidence="2">
        <text>3-O-(beta-D-GlcA-(1-&gt;3)-beta-D-Gal-(1-&gt;3)-beta-D-Gal-(1-&gt;4)-beta-D-Xyl)-L-seryl-[protein] + UDP-N-acetyl-alpha-D-glucosamine = 3-O-(alpha-D-GlcNAc-(1-&gt;4)-beta-D-GlcA-(1-&gt;3)-beta-D-Gal-(1-&gt;3)-beta-D-Gal-(1-&gt;4)-beta-D-Xyl)-L-seryl-[protein] + UDP + H(+)</text>
        <dbReference type="Rhea" id="RHEA:16221"/>
        <dbReference type="Rhea" id="RHEA-COMP:12573"/>
        <dbReference type="Rhea" id="RHEA-COMP:12574"/>
        <dbReference type="ChEBI" id="CHEBI:15378"/>
        <dbReference type="ChEBI" id="CHEBI:57705"/>
        <dbReference type="ChEBI" id="CHEBI:58223"/>
        <dbReference type="ChEBI" id="CHEBI:132093"/>
        <dbReference type="ChEBI" id="CHEBI:132104"/>
        <dbReference type="EC" id="2.4.1.223"/>
    </reaction>
</comment>
<comment type="cofactor">
    <cofactor evidence="2">
        <name>Mn(2+)</name>
        <dbReference type="ChEBI" id="CHEBI:29035"/>
    </cofactor>
</comment>
<comment type="pathway">
    <text>Glycan metabolism; heparan sulfate biosynthesis.</text>
</comment>
<comment type="interaction">
    <interactant intactId="EBI-21506125">
        <id>Q9UBQ6</id>
    </interactant>
    <interactant intactId="EBI-744302">
        <id>P14136</id>
        <label>GFAP</label>
    </interactant>
    <organismsDiffer>false</organismsDiffer>
    <experiments>3</experiments>
</comment>
<comment type="interaction">
    <interactant intactId="EBI-21506125">
        <id>Q9UBQ6</id>
    </interactant>
    <interactant intactId="EBI-1055254">
        <id>Q8WXH2</id>
        <label>JPH3</label>
    </interactant>
    <organismsDiffer>false</organismsDiffer>
    <experiments>3</experiments>
</comment>
<comment type="interaction">
    <interactant intactId="EBI-21506125">
        <id>Q9UBQ6</id>
    </interactant>
    <interactant intactId="EBI-5235340">
        <id>Q7Z699</id>
        <label>SPRED1</label>
    </interactant>
    <organismsDiffer>false</organismsDiffer>
    <experiments>3</experiments>
</comment>
<comment type="subcellular location">
    <subcellularLocation>
        <location evidence="1">Endoplasmic reticulum membrane</location>
        <topology evidence="1">Single-pass type II membrane protein</topology>
    </subcellularLocation>
</comment>
<comment type="subcellular location">
    <molecule>Processed exostosin-like 2</molecule>
    <subcellularLocation>
        <location>Secreted</location>
    </subcellularLocation>
    <text>A soluble form is found in the serum.</text>
</comment>
<comment type="tissue specificity">
    <text>Ubiquitous.</text>
</comment>
<comment type="PTM">
    <text>The soluble form derives from the membrane form by proteolytic processing.</text>
</comment>
<comment type="similarity">
    <text evidence="5">Belongs to the glycosyltransferase 47 family.</text>
</comment>
<comment type="online information" name="Functional Glycomics Gateway - GTase">
    <link uri="http://www.functionalglycomics.org/glycomics/molecule/jsp/glycoEnzyme/viewGlycoEnzyme.jsp?gbpId=gt_hum_530"/>
    <text>Exostosin-like 2</text>
</comment>
<sequence length="330" mass="37466">MRCCHICKLPGRVMGIRVLRLSLVVILVLLLVAGALTALLPSVKEDKMLMLRREIKSQGKSTMDSFTLIMQTYNRTDLLLKLLNHYQAVPNLHKVIVVWNNIGEKAPDELWNSLGPHPIPVIFKQQTANRMRNRLQVFPELETNAVLMVDDDTLISTPDLVFAFSVWQQFPDQIVGFVPRKHVSTSSGIYSYGSFEMQAPGSGNGDQYSMVLIGASFFNSKYLELFQRQPAAVHALIDDTQNCDDIAMNFIIAKHIGKTSGIFVKPVNMDNLEKETNSGYSGMWHRAEHALQRSYCINKLVNIYDSMPLRYSNIMISQFGFPYANYKRKI</sequence>
<protein>
    <recommendedName>
        <fullName>Exostosin-like 2</fullName>
        <ecNumber evidence="2">2.4.1.223</ecNumber>
    </recommendedName>
    <alternativeName>
        <fullName>Alpha-1,4-N-acetylhexosaminyltransferase EXTL2</fullName>
    </alternativeName>
    <alternativeName>
        <fullName>Alpha-GalNAcT EXTL2</fullName>
    </alternativeName>
    <alternativeName>
        <fullName>EXT-related protein 2</fullName>
    </alternativeName>
    <alternativeName>
        <fullName>Glucuronyl-galactosyl-proteoglycan 4-alpha-N-acetylglucosaminyltransferase</fullName>
    </alternativeName>
    <component>
        <recommendedName>
            <fullName>Processed exostosin-like 2</fullName>
        </recommendedName>
    </component>
</protein>
<evidence type="ECO:0000250" key="1"/>
<evidence type="ECO:0000250" key="2">
    <source>
        <dbReference type="UniProtKB" id="Q9ES89"/>
    </source>
</evidence>
<evidence type="ECO:0000255" key="3"/>
<evidence type="ECO:0000269" key="4">
    <source>
    </source>
</evidence>
<evidence type="ECO:0000305" key="5"/>